<dbReference type="EMBL" id="L43967">
    <property type="protein sequence ID" value="AAC71499.1"/>
    <property type="molecule type" value="Genomic_DNA"/>
</dbReference>
<dbReference type="EMBL" id="U02116">
    <property type="protein sequence ID" value="AAD12390.1"/>
    <property type="molecule type" value="Genomic_DNA"/>
</dbReference>
<dbReference type="PIR" id="F64230">
    <property type="entry name" value="F64230"/>
</dbReference>
<dbReference type="RefSeq" id="WP_010869403.1">
    <property type="nucleotide sequence ID" value="NC_000908.2"/>
</dbReference>
<dbReference type="STRING" id="243273.MG_277"/>
<dbReference type="GeneID" id="88282433"/>
<dbReference type="KEGG" id="mge:MG_277"/>
<dbReference type="eggNOG" id="COG0841">
    <property type="taxonomic scope" value="Bacteria"/>
</dbReference>
<dbReference type="HOGENOM" id="CLU_304380_0_0_14"/>
<dbReference type="InParanoid" id="Q49409"/>
<dbReference type="OrthoDB" id="395055at2"/>
<dbReference type="BioCyc" id="MGEN243273:G1GJ2-335-MONOMER"/>
<dbReference type="Proteomes" id="UP000000807">
    <property type="component" value="Chromosome"/>
</dbReference>
<dbReference type="GO" id="GO:0005886">
    <property type="term" value="C:plasma membrane"/>
    <property type="evidence" value="ECO:0007669"/>
    <property type="project" value="UniProtKB-SubCell"/>
</dbReference>
<dbReference type="NCBIfam" id="NF045752">
    <property type="entry name" value="MPN396"/>
    <property type="match status" value="1"/>
</dbReference>
<dbReference type="SUPFAM" id="SSF82866">
    <property type="entry name" value="Multidrug efflux transporter AcrB transmembrane domain"/>
    <property type="match status" value="1"/>
</dbReference>
<organism>
    <name type="scientific">Mycoplasma genitalium (strain ATCC 33530 / DSM 19775 / NCTC 10195 / G37)</name>
    <name type="common">Mycoplasmoides genitalium</name>
    <dbReference type="NCBI Taxonomy" id="243273"/>
    <lineage>
        <taxon>Bacteria</taxon>
        <taxon>Bacillati</taxon>
        <taxon>Mycoplasmatota</taxon>
        <taxon>Mycoplasmoidales</taxon>
        <taxon>Mycoplasmoidaceae</taxon>
        <taxon>Mycoplasmoides</taxon>
    </lineage>
</organism>
<gene>
    <name type="ordered locus">MG277</name>
</gene>
<proteinExistence type="predicted"/>
<reference key="1">
    <citation type="journal article" date="1995" name="Science">
        <title>The minimal gene complement of Mycoplasma genitalium.</title>
        <authorList>
            <person name="Fraser C.M."/>
            <person name="Gocayne J.D."/>
            <person name="White O."/>
            <person name="Adams M.D."/>
            <person name="Clayton R.A."/>
            <person name="Fleischmann R.D."/>
            <person name="Bult C.J."/>
            <person name="Kerlavage A.R."/>
            <person name="Sutton G.G."/>
            <person name="Kelley J.M."/>
            <person name="Fritchman J.L."/>
            <person name="Weidman J.F."/>
            <person name="Small K.V."/>
            <person name="Sandusky M."/>
            <person name="Fuhrmann J.L."/>
            <person name="Nguyen D.T."/>
            <person name="Utterback T.R."/>
            <person name="Saudek D.M."/>
            <person name="Phillips C.A."/>
            <person name="Merrick J.M."/>
            <person name="Tomb J.-F."/>
            <person name="Dougherty B.A."/>
            <person name="Bott K.F."/>
            <person name="Hu P.-C."/>
            <person name="Lucier T.S."/>
            <person name="Peterson S.N."/>
            <person name="Smith H.O."/>
            <person name="Hutchison C.A. III"/>
            <person name="Venter J.C."/>
        </authorList>
    </citation>
    <scope>NUCLEOTIDE SEQUENCE [LARGE SCALE GENOMIC DNA]</scope>
    <source>
        <strain>ATCC 33530 / DSM 19775 / NCTC 10195 / G37</strain>
    </source>
</reference>
<reference key="2">
    <citation type="journal article" date="1993" name="J. Bacteriol.">
        <title>A survey of the Mycoplasma genitalium genome by using random sequencing.</title>
        <authorList>
            <person name="Peterson S.N."/>
            <person name="Hu P.-C."/>
            <person name="Bott K.F."/>
            <person name="Hutchison C.A. III"/>
        </authorList>
    </citation>
    <scope>NUCLEOTIDE SEQUENCE [GENOMIC DNA] OF 624-678</scope>
    <source>
        <strain>ATCC 33530 / DSM 19775 / NCTC 10195 / G37</strain>
    </source>
</reference>
<comment type="subcellular location">
    <subcellularLocation>
        <location evidence="3">Cell membrane</location>
        <topology evidence="3">Multi-pass membrane protein</topology>
    </subcellularLocation>
</comment>
<accession>Q49409</accession>
<accession>Q49253</accession>
<keyword id="KW-1003">Cell membrane</keyword>
<keyword id="KW-0472">Membrane</keyword>
<keyword id="KW-1185">Reference proteome</keyword>
<keyword id="KW-0812">Transmembrane</keyword>
<keyword id="KW-1133">Transmembrane helix</keyword>
<name>Y277_MYCGE</name>
<evidence type="ECO:0000255" key="1"/>
<evidence type="ECO:0000256" key="2">
    <source>
        <dbReference type="SAM" id="MobiDB-lite"/>
    </source>
</evidence>
<evidence type="ECO:0000305" key="3"/>
<protein>
    <recommendedName>
        <fullName>Uncharacterized protein MG277</fullName>
    </recommendedName>
</protein>
<feature type="chain" id="PRO_0000210502" description="Uncharacterized protein MG277">
    <location>
        <begin position="1"/>
        <end position="970"/>
    </location>
</feature>
<feature type="transmembrane region" description="Helical" evidence="1">
    <location>
        <begin position="11"/>
        <end position="31"/>
    </location>
</feature>
<feature type="transmembrane region" description="Helical" evidence="1">
    <location>
        <begin position="515"/>
        <end position="535"/>
    </location>
</feature>
<feature type="transmembrane region" description="Helical" evidence="1">
    <location>
        <begin position="537"/>
        <end position="557"/>
    </location>
</feature>
<feature type="transmembrane region" description="Helical" evidence="1">
    <location>
        <begin position="558"/>
        <end position="578"/>
    </location>
</feature>
<feature type="transmembrane region" description="Helical" evidence="1">
    <location>
        <begin position="614"/>
        <end position="634"/>
    </location>
</feature>
<feature type="transmembrane region" description="Helical" evidence="1">
    <location>
        <begin position="645"/>
        <end position="665"/>
    </location>
</feature>
<feature type="transmembrane region" description="Helical" evidence="1">
    <location>
        <begin position="726"/>
        <end position="746"/>
    </location>
</feature>
<feature type="transmembrane region" description="Helical" evidence="1">
    <location>
        <begin position="762"/>
        <end position="782"/>
    </location>
</feature>
<feature type="transmembrane region" description="Helical" evidence="1">
    <location>
        <begin position="789"/>
        <end position="809"/>
    </location>
</feature>
<feature type="transmembrane region" description="Helical" evidence="1">
    <location>
        <begin position="816"/>
        <end position="836"/>
    </location>
</feature>
<feature type="transmembrane region" description="Helical" evidence="1">
    <location>
        <begin position="877"/>
        <end position="897"/>
    </location>
</feature>
<feature type="transmembrane region" description="Helical" evidence="1">
    <location>
        <begin position="903"/>
        <end position="923"/>
    </location>
</feature>
<feature type="region of interest" description="Disordered" evidence="2">
    <location>
        <begin position="366"/>
        <end position="387"/>
    </location>
</feature>
<feature type="compositionally biased region" description="Low complexity" evidence="2">
    <location>
        <begin position="367"/>
        <end position="387"/>
    </location>
</feature>
<feature type="sequence conflict" description="In Ref. 2; AAD12390." evidence="3" ref="2">
    <original>SGANWK</original>
    <variation>QVQMKA</variation>
    <location>
        <begin position="673"/>
        <end position="678"/>
    </location>
</feature>
<sequence>MRFKKRFSLDWILKIGTILGLVCLGLFGVIFGSYKLLNDSRLGAVFNGSTTTTVYFLNHKSTNNTSLDPQQTKPTNGIENITNIDSFLDGVEKSYANSLFIQGFSSVNITKNTNDKTASELDNIDKSWLVNGGLPSVTLTFEQNREQAKTRQRKRQVDAQVRRNAISSVEHNYQLSLETTDGVVLFDSLDNNFINASIRAVVPQNTSVNSALTFEYKLNKNVVTKESLHTDFLDFINSKNLSSSDYNTGNGQASVEGNGKFFKQNANGTSSSGNKTLVLWKDKQGALNYVRNIFNVVEGSSDYLTFNEREKSLWEFLHAKGSFASGDNLFLNTDANGASPIKKASDITLKNLYYIYAAPNHFSAVASNSNDNNNQNNNNNNNSSDVITVSNSADTRKLRSADSSGFSGLFHNYIISEIRTEDPVSKTGDPVKINPTLQSFLDTNNQRIEYGGNIKFQVGNFLSSDGTYTPPNFVTAATVKELLTNPFPTAATIATAKTSLVNAPLANTITDVSNFASSFIAFGIIVLIAAVLLTLRYKLLGLYKALALGLSVVSSLVIFSAVGGVVDVFSFVGIFFVIAINLINLLNLGELFLRNIRNNASIIESWKLCLKRSFFANLEFHITWLISALVVIYLSNYQVQQLANLMAISAITSYFFSYGISIVLISLFVSSESGANWKLFLYQKDAKALTKTSSNYSLLSSTSDLNTDFFITKNQHDFFLKNNWKFLFVWLILLAIGVVMLVLYLVQPNLLGEFLAADVESSNGIIAGIGIVSLLYLAYCLIRYGVAYCLSYLVSFILLCSGLFAVMYLTNYLFSIDQSTIQLITFVYLFWLFFAAKVSQTTTWTYFYWFKRSLKDKVFIKNLFNDNFNSQWKIDLIESSSLVFIFIIYSGFNFGGIDGNFNLVIFYLIAIVGLFDVATAFLPMFCFGLINGWLSPFNYVHSRLSLKHKKHPFKEIDQIEEQLIAGINSF</sequence>